<gene>
    <name type="primary">mdm10</name>
    <name type="ORF">SJAG_03416</name>
</gene>
<proteinExistence type="inferred from homology"/>
<organism>
    <name type="scientific">Schizosaccharomyces japonicus (strain yFS275 / FY16936)</name>
    <name type="common">Fission yeast</name>
    <dbReference type="NCBI Taxonomy" id="402676"/>
    <lineage>
        <taxon>Eukaryota</taxon>
        <taxon>Fungi</taxon>
        <taxon>Dikarya</taxon>
        <taxon>Ascomycota</taxon>
        <taxon>Taphrinomycotina</taxon>
        <taxon>Schizosaccharomycetes</taxon>
        <taxon>Schizosaccharomycetales</taxon>
        <taxon>Schizosaccharomycetaceae</taxon>
        <taxon>Schizosaccharomyces</taxon>
    </lineage>
</organism>
<feature type="chain" id="PRO_0000384200" description="Mitochondrial distribution and morphology protein 10">
    <location>
        <begin position="1"/>
        <end position="372"/>
    </location>
</feature>
<dbReference type="EMBL" id="KE651167">
    <property type="protein sequence ID" value="EEB08270.2"/>
    <property type="status" value="ALT_SEQ"/>
    <property type="molecule type" value="Genomic_DNA"/>
</dbReference>
<dbReference type="RefSeq" id="XP_002174563.2">
    <property type="nucleotide sequence ID" value="XM_002174527.2"/>
</dbReference>
<dbReference type="SMR" id="B6K463"/>
<dbReference type="STRING" id="402676.B6K463"/>
<dbReference type="GeneID" id="7050148"/>
<dbReference type="JaponicusDB" id="SJAG_03416">
    <property type="gene designation" value="mdm10"/>
</dbReference>
<dbReference type="eggNOG" id="ENOG502QUN5">
    <property type="taxonomic scope" value="Eukaryota"/>
</dbReference>
<dbReference type="OrthoDB" id="2103793at2759"/>
<dbReference type="Proteomes" id="UP000001744">
    <property type="component" value="Unassembled WGS sequence"/>
</dbReference>
<dbReference type="GO" id="GO:0032865">
    <property type="term" value="C:ERMES complex"/>
    <property type="evidence" value="ECO:0000318"/>
    <property type="project" value="GO_Central"/>
</dbReference>
<dbReference type="GO" id="GO:0001401">
    <property type="term" value="C:SAM complex"/>
    <property type="evidence" value="ECO:0000318"/>
    <property type="project" value="GO_Central"/>
</dbReference>
<dbReference type="GO" id="GO:0051654">
    <property type="term" value="P:establishment of mitochondrion localization"/>
    <property type="evidence" value="ECO:0000318"/>
    <property type="project" value="GO_Central"/>
</dbReference>
<dbReference type="GO" id="GO:0000002">
    <property type="term" value="P:mitochondrial genome maintenance"/>
    <property type="evidence" value="ECO:0007669"/>
    <property type="project" value="UniProtKB-UniRule"/>
</dbReference>
<dbReference type="GO" id="GO:0070096">
    <property type="term" value="P:mitochondrial outer membrane translocase complex assembly"/>
    <property type="evidence" value="ECO:0000318"/>
    <property type="project" value="GO_Central"/>
</dbReference>
<dbReference type="GO" id="GO:1990456">
    <property type="term" value="P:mitochondrion-endoplasmic reticulum membrane tethering"/>
    <property type="evidence" value="ECO:0000318"/>
    <property type="project" value="GO_Central"/>
</dbReference>
<dbReference type="GO" id="GO:0015914">
    <property type="term" value="P:phospholipid transport"/>
    <property type="evidence" value="ECO:0000318"/>
    <property type="project" value="GO_Central"/>
</dbReference>
<dbReference type="GO" id="GO:0045040">
    <property type="term" value="P:protein insertion into mitochondrial outer membrane"/>
    <property type="evidence" value="ECO:0000318"/>
    <property type="project" value="GO_Central"/>
</dbReference>
<dbReference type="HAMAP" id="MF_03102">
    <property type="entry name" value="Mdm10"/>
    <property type="match status" value="1"/>
</dbReference>
<dbReference type="InterPro" id="IPR027539">
    <property type="entry name" value="Mdm10"/>
</dbReference>
<dbReference type="PANTHER" id="PTHR28035">
    <property type="entry name" value="MITOCHONDRIAL DISTRIBUTION AND MORPHOLOGY PROTEIN 10"/>
    <property type="match status" value="1"/>
</dbReference>
<dbReference type="PANTHER" id="PTHR28035:SF1">
    <property type="entry name" value="MITOCHONDRIAL DISTRIBUTION AND MORPHOLOGY PROTEIN 10"/>
    <property type="match status" value="1"/>
</dbReference>
<dbReference type="Pfam" id="PF12519">
    <property type="entry name" value="MDM10"/>
    <property type="match status" value="1"/>
</dbReference>
<evidence type="ECO:0000255" key="1">
    <source>
        <dbReference type="HAMAP-Rule" id="MF_03102"/>
    </source>
</evidence>
<evidence type="ECO:0000305" key="2"/>
<accession>B6K463</accession>
<reference key="1">
    <citation type="journal article" date="2011" name="Science">
        <title>Comparative functional genomics of the fission yeasts.</title>
        <authorList>
            <person name="Rhind N."/>
            <person name="Chen Z."/>
            <person name="Yassour M."/>
            <person name="Thompson D.A."/>
            <person name="Haas B.J."/>
            <person name="Habib N."/>
            <person name="Wapinski I."/>
            <person name="Roy S."/>
            <person name="Lin M.F."/>
            <person name="Heiman D.I."/>
            <person name="Young S.K."/>
            <person name="Furuya K."/>
            <person name="Guo Y."/>
            <person name="Pidoux A."/>
            <person name="Chen H.M."/>
            <person name="Robbertse B."/>
            <person name="Goldberg J.M."/>
            <person name="Aoki K."/>
            <person name="Bayne E.H."/>
            <person name="Berlin A.M."/>
            <person name="Desjardins C.A."/>
            <person name="Dobbs E."/>
            <person name="Dukaj L."/>
            <person name="Fan L."/>
            <person name="FitzGerald M.G."/>
            <person name="French C."/>
            <person name="Gujja S."/>
            <person name="Hansen K."/>
            <person name="Keifenheim D."/>
            <person name="Levin J.Z."/>
            <person name="Mosher R.A."/>
            <person name="Mueller C.A."/>
            <person name="Pfiffner J."/>
            <person name="Priest M."/>
            <person name="Russ C."/>
            <person name="Smialowska A."/>
            <person name="Swoboda P."/>
            <person name="Sykes S.M."/>
            <person name="Vaughn M."/>
            <person name="Vengrova S."/>
            <person name="Yoder R."/>
            <person name="Zeng Q."/>
            <person name="Allshire R."/>
            <person name="Baulcombe D."/>
            <person name="Birren B.W."/>
            <person name="Brown W."/>
            <person name="Ekwall K."/>
            <person name="Kellis M."/>
            <person name="Leatherwood J."/>
            <person name="Levin H."/>
            <person name="Margalit H."/>
            <person name="Martienssen R."/>
            <person name="Nieduszynski C.A."/>
            <person name="Spatafora J.W."/>
            <person name="Friedman N."/>
            <person name="Dalgaard J.Z."/>
            <person name="Baumann P."/>
            <person name="Niki H."/>
            <person name="Regev A."/>
            <person name="Nusbaum C."/>
        </authorList>
    </citation>
    <scope>NUCLEOTIDE SEQUENCE [LARGE SCALE GENOMIC DNA]</scope>
    <source>
        <strain>yFS275 / FY16936</strain>
    </source>
</reference>
<keyword id="KW-0472">Membrane</keyword>
<keyword id="KW-0496">Mitochondrion</keyword>
<keyword id="KW-1000">Mitochondrion outer membrane</keyword>
<keyword id="KW-1185">Reference proteome</keyword>
<keyword id="KW-0812">Transmembrane</keyword>
<keyword id="KW-1134">Transmembrane beta strand</keyword>
<sequence>MNSFTRALFDEYLRKTGWNRGNLYTNLTQSADEVLNLEIPSGINCDLSSIPSPNFASNWEIQMLPILNGSVSYLYSNVDLRLPQNVFGHFAQHQQKFQHLLPPYRHLKTELTDMGFERKPYLMFGKLHLPTAKLEAIFAKRISPPNNLIIRMCHTKRGILTSTSTLLHWQRDTGRSCTEILYSTDEAMIGFRKLWNSGRLQPSLFESANLTKFDPFWSVGAEVYYGALTKCVGASIGARLYSCANGVHNPYSVTCTLNPIVGHLVSTFATSHNDTRVLCSQFEFNLYSYESRLRLGMELFQRKRLLTNEDNHSDDIRQQGNDGVLRLSVSTDGDLVVAWNGQLRDFLYTVGTKVHMLSINPVFFGIHFQYSH</sequence>
<name>MDM10_SCHJY</name>
<comment type="function">
    <text evidence="1">Component of the ERMES/MDM complex, which serves as a molecular tether to connect the endoplasmic reticulum and mitochondria. Components of this complex are involved in the control of mitochondrial shape and protein biogenesis and may function in phospholipid exchange. mdm10 is involved in the late assembly steps of the general translocase of the mitochondrial outer membrane (TOM complex). Functions in the tom40-specific route of the assembly of outer membrane beta-barrel proteins, including the association of tom40 with the receptor tom22 and small TOM proteins. Can associate with the SAM(core) complex as well as the mdm12-mmm1 complex, both involved in late steps of the major beta-barrel assembly pathway, that is responsible for biogenesis of all outer membrane beta-barrel proteins. May act as a switch that shuttles between both complexes and channels precursor proteins into the tom40-specific pathway. Plays a role in mitochondrial morphology and in the inheritance of mitochondria.</text>
</comment>
<comment type="subunit">
    <text evidence="1">Component of the ER-mitochondria encounter structure (ERMES) or MDM complex, composed of mmm1, mdm10, mdm12 and mdm34. Associates with the mitochondrial outer membrane sorting assembly machinery SAM(core) complex.</text>
</comment>
<comment type="subcellular location">
    <subcellularLocation>
        <location evidence="1">Mitochondrion outer membrane</location>
        <topology evidence="1">Multi-pass membrane protein</topology>
    </subcellularLocation>
    <text evidence="1">The ERMES/MDM complex localizes to a few discrete foci (around 10 per single cell), that represent mitochondria-endoplasmic reticulum junctions. These foci are often found next to mtDNA nucleoids.</text>
</comment>
<comment type="domain">
    <text>Lacks alpha-helical transmembrane segments, suggesting that it resides in the membrane via beta-sheet conformations similar to those predicted for other outer membrane proteins and porin.</text>
</comment>
<comment type="similarity">
    <text evidence="1">Belongs to the MDM10 family.</text>
</comment>
<comment type="sequence caution" evidence="2">
    <conflict type="erroneous gene model prediction">
        <sequence resource="EMBL-CDS" id="EEB08270"/>
    </conflict>
</comment>
<protein>
    <recommendedName>
        <fullName evidence="1">Mitochondrial distribution and morphology protein 10</fullName>
    </recommendedName>
    <alternativeName>
        <fullName evidence="1">Mitochondrial inheritance component mdm10</fullName>
    </alternativeName>
</protein>